<reference key="1">
    <citation type="journal article" date="2001" name="Proc. Natl. Acad. Sci. U.S.A.">
        <title>Complete genomic sequence of Pasteurella multocida Pm70.</title>
        <authorList>
            <person name="May B.J."/>
            <person name="Zhang Q."/>
            <person name="Li L.L."/>
            <person name="Paustian M.L."/>
            <person name="Whittam T.S."/>
            <person name="Kapur V."/>
        </authorList>
    </citation>
    <scope>NUCLEOTIDE SEQUENCE [LARGE SCALE GENOMIC DNA]</scope>
    <source>
        <strain>Pm70</strain>
    </source>
</reference>
<name>GLND_PASMU</name>
<protein>
    <recommendedName>
        <fullName evidence="1">Bifunctional uridylyltransferase/uridylyl-removing enzyme</fullName>
        <shortName evidence="1">UTase/UR</shortName>
    </recommendedName>
    <alternativeName>
        <fullName evidence="1">Bifunctional [protein-PII] modification enzyme</fullName>
    </alternativeName>
    <alternativeName>
        <fullName evidence="1">Bifunctional nitrogen sensor protein</fullName>
    </alternativeName>
    <domain>
        <recommendedName>
            <fullName evidence="1">[Protein-PII] uridylyltransferase</fullName>
            <shortName evidence="1">PII uridylyltransferase</shortName>
            <shortName evidence="1">UTase</shortName>
            <ecNumber evidence="1">2.7.7.59</ecNumber>
        </recommendedName>
    </domain>
    <domain>
        <recommendedName>
            <fullName evidence="1">[Protein-PII]-UMP uridylyl-removing enzyme</fullName>
            <shortName evidence="1">UR</shortName>
            <ecNumber evidence="1">3.1.4.-</ecNumber>
        </recommendedName>
    </domain>
</protein>
<evidence type="ECO:0000255" key="1">
    <source>
        <dbReference type="HAMAP-Rule" id="MF_00277"/>
    </source>
</evidence>
<evidence type="ECO:0000255" key="2">
    <source>
        <dbReference type="PROSITE-ProRule" id="PRU01175"/>
    </source>
</evidence>
<gene>
    <name evidence="1" type="primary">glnD</name>
    <name type="ordered locus">PM0460</name>
</gene>
<sequence length="864" mass="100736">MLFPYFPLSELDVSAVRTQKENLKQFELTQFAHYEIYDLITNRTQFCDHLLRDLWLRFGLVKDNTLTLIAVGGYGREEMFPLSDLDFLILTSEQVEAQTEQKIRQFVQFLWDCGFDVGHAVRTLSECEQAGRDNITVATNLLEARYLEGNFSQFQQLDNVLQKADFWPREAFFQAKYQERVERYQRYHNTSYNLEPDIKHSPGGLRDLHLLYWIALRHTGAKNLTDILNSGFIYPQEYAQLLESQQFLFKVRFALHLILKRYDNRLLFERQIRVAELLEFVGPGNQGVEKMMKSFFQALQTISLLSDLLVKHYREHFLQTNEPVQVRLLDKEFQCVNNAICLRQANLFVEQPEQILSLFFHLTQDHQLDIHSSTLRQLHLALEQRSGYLSELPVARERFLRLFNQPGAIARALVPMHKYGVLKAYLPQWHHIEGLMQFDLFHCYTVDEHIVRTLLKLEYFLEAESVVPHPICSQIFSRLTDRTLLYIAALFHDIAKGRGGDHAELGAVDVAQFAQQHGFDQREIHTLTWLVEQHLLMSVTAQRRDIHDPEVVLHFAEAVQNNVRLDYLTCLTVADICATNETLWNSWKRTLIATLYQFTTQQFAQGMDCLLDHAEKIENHRQQALTLLTQNSLLSAVQIEEIWQHCPEEYFLRNTPKQIAWHTELLADNQTELLVKISNRFSEGGTEIFVYCQDQPNLFHKVVTTIGAKKFSIHDAQIITSHDGYVFDSFIITELDGKLVKFDRRRSLEKALMQALNTSKLPTFRATDNPKLQHFHVKTEVRFLKEQRTDQTEMELFALDQTGLLAKVSQVFSELKLNLLNAKITTIGEKAEDFFILTNSEDRALTAEQRQCLTQRLHEVLEPK</sequence>
<keyword id="KW-0378">Hydrolase</keyword>
<keyword id="KW-0460">Magnesium</keyword>
<keyword id="KW-0511">Multifunctional enzyme</keyword>
<keyword id="KW-0548">Nucleotidyltransferase</keyword>
<keyword id="KW-1185">Reference proteome</keyword>
<keyword id="KW-0677">Repeat</keyword>
<keyword id="KW-0808">Transferase</keyword>
<comment type="function">
    <text evidence="1">Modifies, by uridylylation and deuridylylation, the PII regulatory proteins (GlnB and homologs), in response to the nitrogen status of the cell that GlnD senses through the glutamine level. Under low glutamine levels, catalyzes the conversion of the PII proteins and UTP to PII-UMP and PPi, while under higher glutamine levels, GlnD hydrolyzes PII-UMP to PII and UMP (deuridylylation). Thus, controls uridylylation state and activity of the PII proteins, and plays an important role in the regulation of nitrogen assimilation and metabolism.</text>
</comment>
<comment type="catalytic activity">
    <reaction evidence="1">
        <text>[protein-PII]-L-tyrosine + UTP = [protein-PII]-uridylyl-L-tyrosine + diphosphate</text>
        <dbReference type="Rhea" id="RHEA:13673"/>
        <dbReference type="Rhea" id="RHEA-COMP:12147"/>
        <dbReference type="Rhea" id="RHEA-COMP:12148"/>
        <dbReference type="ChEBI" id="CHEBI:33019"/>
        <dbReference type="ChEBI" id="CHEBI:46398"/>
        <dbReference type="ChEBI" id="CHEBI:46858"/>
        <dbReference type="ChEBI" id="CHEBI:90602"/>
        <dbReference type="EC" id="2.7.7.59"/>
    </reaction>
</comment>
<comment type="catalytic activity">
    <reaction evidence="1">
        <text>[protein-PII]-uridylyl-L-tyrosine + H2O = [protein-PII]-L-tyrosine + UMP + H(+)</text>
        <dbReference type="Rhea" id="RHEA:48600"/>
        <dbReference type="Rhea" id="RHEA-COMP:12147"/>
        <dbReference type="Rhea" id="RHEA-COMP:12148"/>
        <dbReference type="ChEBI" id="CHEBI:15377"/>
        <dbReference type="ChEBI" id="CHEBI:15378"/>
        <dbReference type="ChEBI" id="CHEBI:46858"/>
        <dbReference type="ChEBI" id="CHEBI:57865"/>
        <dbReference type="ChEBI" id="CHEBI:90602"/>
    </reaction>
</comment>
<comment type="cofactor">
    <cofactor evidence="1">
        <name>Mg(2+)</name>
        <dbReference type="ChEBI" id="CHEBI:18420"/>
    </cofactor>
</comment>
<comment type="activity regulation">
    <text evidence="1">Uridylyltransferase (UTase) activity is inhibited by glutamine, while glutamine activates uridylyl-removing (UR) activity.</text>
</comment>
<comment type="domain">
    <text evidence="1">Has four distinct domains: an N-terminal nucleotidyltransferase (NT) domain responsible for UTase activity, a central HD domain that encodes UR activity, and two C-terminal ACT domains that seem to have a role in glutamine sensing.</text>
</comment>
<comment type="similarity">
    <text evidence="1">Belongs to the GlnD family.</text>
</comment>
<feature type="chain" id="PRO_0000192749" description="Bifunctional uridylyltransferase/uridylyl-removing enzyme">
    <location>
        <begin position="1"/>
        <end position="864"/>
    </location>
</feature>
<feature type="domain" description="HD" evidence="2">
    <location>
        <begin position="446"/>
        <end position="562"/>
    </location>
</feature>
<feature type="domain" description="ACT 1" evidence="1">
    <location>
        <begin position="687"/>
        <end position="766"/>
    </location>
</feature>
<feature type="domain" description="ACT 2" evidence="1">
    <location>
        <begin position="793"/>
        <end position="864"/>
    </location>
</feature>
<feature type="region of interest" description="Uridylyltransferase">
    <location>
        <begin position="1"/>
        <end position="328"/>
    </location>
</feature>
<feature type="region of interest" description="Uridylyl-removing">
    <location>
        <begin position="329"/>
        <end position="686"/>
    </location>
</feature>
<accession>Q9CNH1</accession>
<proteinExistence type="inferred from homology"/>
<organism>
    <name type="scientific">Pasteurella multocida (strain Pm70)</name>
    <dbReference type="NCBI Taxonomy" id="272843"/>
    <lineage>
        <taxon>Bacteria</taxon>
        <taxon>Pseudomonadati</taxon>
        <taxon>Pseudomonadota</taxon>
        <taxon>Gammaproteobacteria</taxon>
        <taxon>Pasteurellales</taxon>
        <taxon>Pasteurellaceae</taxon>
        <taxon>Pasteurella</taxon>
    </lineage>
</organism>
<dbReference type="EC" id="2.7.7.59" evidence="1"/>
<dbReference type="EC" id="3.1.4.-" evidence="1"/>
<dbReference type="EMBL" id="AE004439">
    <property type="protein sequence ID" value="AAK02544.1"/>
    <property type="molecule type" value="Genomic_DNA"/>
</dbReference>
<dbReference type="RefSeq" id="WP_010906658.1">
    <property type="nucleotide sequence ID" value="NC_002663.1"/>
</dbReference>
<dbReference type="SMR" id="Q9CNH1"/>
<dbReference type="STRING" id="272843.PM0460"/>
<dbReference type="EnsemblBacteria" id="AAK02544">
    <property type="protein sequence ID" value="AAK02544"/>
    <property type="gene ID" value="PM0460"/>
</dbReference>
<dbReference type="KEGG" id="pmu:PM0460"/>
<dbReference type="PATRIC" id="fig|272843.6.peg.472"/>
<dbReference type="HOGENOM" id="CLU_012833_0_0_6"/>
<dbReference type="OrthoDB" id="9758038at2"/>
<dbReference type="Proteomes" id="UP000000809">
    <property type="component" value="Chromosome"/>
</dbReference>
<dbReference type="GO" id="GO:0008773">
    <property type="term" value="F:[protein-PII] uridylyltransferase activity"/>
    <property type="evidence" value="ECO:0007669"/>
    <property type="project" value="UniProtKB-UniRule"/>
</dbReference>
<dbReference type="GO" id="GO:0008081">
    <property type="term" value="F:phosphoric diester hydrolase activity"/>
    <property type="evidence" value="ECO:0007669"/>
    <property type="project" value="UniProtKB-UniRule"/>
</dbReference>
<dbReference type="GO" id="GO:0006808">
    <property type="term" value="P:regulation of nitrogen utilization"/>
    <property type="evidence" value="ECO:0007669"/>
    <property type="project" value="UniProtKB-UniRule"/>
</dbReference>
<dbReference type="CDD" id="cd04899">
    <property type="entry name" value="ACT_ACR-UUR-like_2"/>
    <property type="match status" value="1"/>
</dbReference>
<dbReference type="CDD" id="cd04900">
    <property type="entry name" value="ACT_UUR-like_1"/>
    <property type="match status" value="1"/>
</dbReference>
<dbReference type="CDD" id="cd00077">
    <property type="entry name" value="HDc"/>
    <property type="match status" value="1"/>
</dbReference>
<dbReference type="CDD" id="cd05401">
    <property type="entry name" value="NT_GlnE_GlnD_like"/>
    <property type="match status" value="1"/>
</dbReference>
<dbReference type="Gene3D" id="1.10.3210.10">
    <property type="entry name" value="Hypothetical protein af1432"/>
    <property type="match status" value="1"/>
</dbReference>
<dbReference type="HAMAP" id="MF_00277">
    <property type="entry name" value="PII_uridylyl_transf"/>
    <property type="match status" value="1"/>
</dbReference>
<dbReference type="InterPro" id="IPR045865">
    <property type="entry name" value="ACT-like_dom_sf"/>
</dbReference>
<dbReference type="InterPro" id="IPR002912">
    <property type="entry name" value="ACT_dom"/>
</dbReference>
<dbReference type="InterPro" id="IPR003607">
    <property type="entry name" value="HD/PDEase_dom"/>
</dbReference>
<dbReference type="InterPro" id="IPR006674">
    <property type="entry name" value="HD_domain"/>
</dbReference>
<dbReference type="InterPro" id="IPR043519">
    <property type="entry name" value="NT_sf"/>
</dbReference>
<dbReference type="InterPro" id="IPR013546">
    <property type="entry name" value="PII_UdlTrfase/GS_AdlTrfase"/>
</dbReference>
<dbReference type="InterPro" id="IPR010043">
    <property type="entry name" value="UTase/UR"/>
</dbReference>
<dbReference type="NCBIfam" id="NF002487">
    <property type="entry name" value="PRK01759.1"/>
    <property type="match status" value="1"/>
</dbReference>
<dbReference type="NCBIfam" id="TIGR01693">
    <property type="entry name" value="UTase_glnD"/>
    <property type="match status" value="1"/>
</dbReference>
<dbReference type="PANTHER" id="PTHR47320">
    <property type="entry name" value="BIFUNCTIONAL URIDYLYLTRANSFERASE/URIDYLYL-REMOVING ENZYME"/>
    <property type="match status" value="1"/>
</dbReference>
<dbReference type="PANTHER" id="PTHR47320:SF1">
    <property type="entry name" value="BIFUNCTIONAL URIDYLYLTRANSFERASE_URIDYLYL-REMOVING ENZYME"/>
    <property type="match status" value="1"/>
</dbReference>
<dbReference type="Pfam" id="PF01842">
    <property type="entry name" value="ACT"/>
    <property type="match status" value="1"/>
</dbReference>
<dbReference type="Pfam" id="PF08335">
    <property type="entry name" value="GlnD_UR_UTase"/>
    <property type="match status" value="1"/>
</dbReference>
<dbReference type="Pfam" id="PF01966">
    <property type="entry name" value="HD"/>
    <property type="match status" value="1"/>
</dbReference>
<dbReference type="PIRSF" id="PIRSF006288">
    <property type="entry name" value="PII_uridyltransf"/>
    <property type="match status" value="1"/>
</dbReference>
<dbReference type="SMART" id="SM00471">
    <property type="entry name" value="HDc"/>
    <property type="match status" value="1"/>
</dbReference>
<dbReference type="SUPFAM" id="SSF55021">
    <property type="entry name" value="ACT-like"/>
    <property type="match status" value="2"/>
</dbReference>
<dbReference type="SUPFAM" id="SSF109604">
    <property type="entry name" value="HD-domain/PDEase-like"/>
    <property type="match status" value="1"/>
</dbReference>
<dbReference type="SUPFAM" id="SSF81301">
    <property type="entry name" value="Nucleotidyltransferase"/>
    <property type="match status" value="1"/>
</dbReference>
<dbReference type="SUPFAM" id="SSF81593">
    <property type="entry name" value="Nucleotidyltransferase substrate binding subunit/domain"/>
    <property type="match status" value="1"/>
</dbReference>
<dbReference type="PROSITE" id="PS51671">
    <property type="entry name" value="ACT"/>
    <property type="match status" value="2"/>
</dbReference>
<dbReference type="PROSITE" id="PS51831">
    <property type="entry name" value="HD"/>
    <property type="match status" value="1"/>
</dbReference>